<keyword id="KW-0997">Cell inner membrane</keyword>
<keyword id="KW-1003">Cell membrane</keyword>
<keyword id="KW-0963">Cytoplasm</keyword>
<keyword id="KW-0342">GTP-binding</keyword>
<keyword id="KW-0472">Membrane</keyword>
<keyword id="KW-0547">Nucleotide-binding</keyword>
<keyword id="KW-0690">Ribosome biogenesis</keyword>
<keyword id="KW-0694">RNA-binding</keyword>
<keyword id="KW-0699">rRNA-binding</keyword>
<dbReference type="EMBL" id="CP001113">
    <property type="protein sequence ID" value="ACF61412.1"/>
    <property type="molecule type" value="Genomic_DNA"/>
</dbReference>
<dbReference type="RefSeq" id="WP_000102232.1">
    <property type="nucleotide sequence ID" value="NZ_CCMR01000001.1"/>
</dbReference>
<dbReference type="SMR" id="B4T1F7"/>
<dbReference type="KEGG" id="see:SNSL254_A2783"/>
<dbReference type="HOGENOM" id="CLU_038009_1_2_6"/>
<dbReference type="Proteomes" id="UP000008824">
    <property type="component" value="Chromosome"/>
</dbReference>
<dbReference type="GO" id="GO:0005829">
    <property type="term" value="C:cytosol"/>
    <property type="evidence" value="ECO:0007669"/>
    <property type="project" value="TreeGrafter"/>
</dbReference>
<dbReference type="GO" id="GO:0005886">
    <property type="term" value="C:plasma membrane"/>
    <property type="evidence" value="ECO:0007669"/>
    <property type="project" value="UniProtKB-SubCell"/>
</dbReference>
<dbReference type="GO" id="GO:0005525">
    <property type="term" value="F:GTP binding"/>
    <property type="evidence" value="ECO:0007669"/>
    <property type="project" value="UniProtKB-UniRule"/>
</dbReference>
<dbReference type="GO" id="GO:0003924">
    <property type="term" value="F:GTPase activity"/>
    <property type="evidence" value="ECO:0007669"/>
    <property type="project" value="UniProtKB-UniRule"/>
</dbReference>
<dbReference type="GO" id="GO:0043024">
    <property type="term" value="F:ribosomal small subunit binding"/>
    <property type="evidence" value="ECO:0007669"/>
    <property type="project" value="TreeGrafter"/>
</dbReference>
<dbReference type="GO" id="GO:0070181">
    <property type="term" value="F:small ribosomal subunit rRNA binding"/>
    <property type="evidence" value="ECO:0007669"/>
    <property type="project" value="UniProtKB-UniRule"/>
</dbReference>
<dbReference type="GO" id="GO:0000028">
    <property type="term" value="P:ribosomal small subunit assembly"/>
    <property type="evidence" value="ECO:0007669"/>
    <property type="project" value="TreeGrafter"/>
</dbReference>
<dbReference type="CDD" id="cd04163">
    <property type="entry name" value="Era"/>
    <property type="match status" value="1"/>
</dbReference>
<dbReference type="CDD" id="cd22534">
    <property type="entry name" value="KH-II_Era"/>
    <property type="match status" value="1"/>
</dbReference>
<dbReference type="FunFam" id="3.30.300.20:FF:000003">
    <property type="entry name" value="GTPase Era"/>
    <property type="match status" value="1"/>
</dbReference>
<dbReference type="FunFam" id="3.40.50.300:FF:000094">
    <property type="entry name" value="GTPase Era"/>
    <property type="match status" value="1"/>
</dbReference>
<dbReference type="Gene3D" id="3.30.300.20">
    <property type="match status" value="1"/>
</dbReference>
<dbReference type="Gene3D" id="3.40.50.300">
    <property type="entry name" value="P-loop containing nucleotide triphosphate hydrolases"/>
    <property type="match status" value="1"/>
</dbReference>
<dbReference type="HAMAP" id="MF_00367">
    <property type="entry name" value="GTPase_Era"/>
    <property type="match status" value="1"/>
</dbReference>
<dbReference type="InterPro" id="IPR030388">
    <property type="entry name" value="G_ERA_dom"/>
</dbReference>
<dbReference type="InterPro" id="IPR006073">
    <property type="entry name" value="GTP-bd"/>
</dbReference>
<dbReference type="InterPro" id="IPR005662">
    <property type="entry name" value="GTPase_Era-like"/>
</dbReference>
<dbReference type="InterPro" id="IPR015946">
    <property type="entry name" value="KH_dom-like_a/b"/>
</dbReference>
<dbReference type="InterPro" id="IPR004044">
    <property type="entry name" value="KH_dom_type_2"/>
</dbReference>
<dbReference type="InterPro" id="IPR009019">
    <property type="entry name" value="KH_sf_prok-type"/>
</dbReference>
<dbReference type="InterPro" id="IPR027417">
    <property type="entry name" value="P-loop_NTPase"/>
</dbReference>
<dbReference type="InterPro" id="IPR005225">
    <property type="entry name" value="Small_GTP-bd"/>
</dbReference>
<dbReference type="NCBIfam" id="TIGR00436">
    <property type="entry name" value="era"/>
    <property type="match status" value="1"/>
</dbReference>
<dbReference type="NCBIfam" id="NF000908">
    <property type="entry name" value="PRK00089.1"/>
    <property type="match status" value="1"/>
</dbReference>
<dbReference type="NCBIfam" id="TIGR00231">
    <property type="entry name" value="small_GTP"/>
    <property type="match status" value="1"/>
</dbReference>
<dbReference type="PANTHER" id="PTHR42698">
    <property type="entry name" value="GTPASE ERA"/>
    <property type="match status" value="1"/>
</dbReference>
<dbReference type="PANTHER" id="PTHR42698:SF1">
    <property type="entry name" value="GTPASE ERA, MITOCHONDRIAL"/>
    <property type="match status" value="1"/>
</dbReference>
<dbReference type="Pfam" id="PF07650">
    <property type="entry name" value="KH_2"/>
    <property type="match status" value="1"/>
</dbReference>
<dbReference type="Pfam" id="PF01926">
    <property type="entry name" value="MMR_HSR1"/>
    <property type="match status" value="1"/>
</dbReference>
<dbReference type="SUPFAM" id="SSF52540">
    <property type="entry name" value="P-loop containing nucleoside triphosphate hydrolases"/>
    <property type="match status" value="1"/>
</dbReference>
<dbReference type="SUPFAM" id="SSF54814">
    <property type="entry name" value="Prokaryotic type KH domain (KH-domain type II)"/>
    <property type="match status" value="1"/>
</dbReference>
<dbReference type="PROSITE" id="PS51713">
    <property type="entry name" value="G_ERA"/>
    <property type="match status" value="1"/>
</dbReference>
<dbReference type="PROSITE" id="PS50823">
    <property type="entry name" value="KH_TYPE_2"/>
    <property type="match status" value="1"/>
</dbReference>
<sequence length="301" mass="33882">MSTDKTYCGFIAIVGRPNVGKSTLLNKLLGQKISITSRKAQTTRHRIVGIHTEGPYQAIYVDTPGLHMEEKRAINRLMNKAASSSIGDVELVIFVVEGTRWTPDDEMVLNKLRDGKAPVILAVNKVDNVQEKVDLLPHLQFLASQMNFLDIVPISAETGMNVDTIAGIVRKHLPEAIHHFPEDYITDRSQRFMASEIIREKLMRFLGAELPYSVTVEIERFVTNERGGYDINGLILVEREGQKKMVIGNKGAKIKTIGIEARKDMQEMFEAPVHLELWVKVKSGWADDERALRSLGYVDDL</sequence>
<organism>
    <name type="scientific">Salmonella newport (strain SL254)</name>
    <dbReference type="NCBI Taxonomy" id="423368"/>
    <lineage>
        <taxon>Bacteria</taxon>
        <taxon>Pseudomonadati</taxon>
        <taxon>Pseudomonadota</taxon>
        <taxon>Gammaproteobacteria</taxon>
        <taxon>Enterobacterales</taxon>
        <taxon>Enterobacteriaceae</taxon>
        <taxon>Salmonella</taxon>
    </lineage>
</organism>
<proteinExistence type="inferred from homology"/>
<protein>
    <recommendedName>
        <fullName evidence="1">GTPase Era</fullName>
    </recommendedName>
</protein>
<accession>B4T1F7</accession>
<name>ERA_SALNS</name>
<reference key="1">
    <citation type="journal article" date="2011" name="J. Bacteriol.">
        <title>Comparative genomics of 28 Salmonella enterica isolates: evidence for CRISPR-mediated adaptive sublineage evolution.</title>
        <authorList>
            <person name="Fricke W.F."/>
            <person name="Mammel M.K."/>
            <person name="McDermott P.F."/>
            <person name="Tartera C."/>
            <person name="White D.G."/>
            <person name="Leclerc J.E."/>
            <person name="Ravel J."/>
            <person name="Cebula T.A."/>
        </authorList>
    </citation>
    <scope>NUCLEOTIDE SEQUENCE [LARGE SCALE GENOMIC DNA]</scope>
    <source>
        <strain>SL254</strain>
    </source>
</reference>
<feature type="chain" id="PRO_1000121352" description="GTPase Era">
    <location>
        <begin position="1"/>
        <end position="301"/>
    </location>
</feature>
<feature type="domain" description="Era-type G" evidence="2">
    <location>
        <begin position="7"/>
        <end position="175"/>
    </location>
</feature>
<feature type="domain" description="KH type-2" evidence="1">
    <location>
        <begin position="206"/>
        <end position="283"/>
    </location>
</feature>
<feature type="region of interest" description="G1" evidence="2">
    <location>
        <begin position="15"/>
        <end position="22"/>
    </location>
</feature>
<feature type="region of interest" description="G2" evidence="2">
    <location>
        <begin position="41"/>
        <end position="45"/>
    </location>
</feature>
<feature type="region of interest" description="G3" evidence="2">
    <location>
        <begin position="62"/>
        <end position="65"/>
    </location>
</feature>
<feature type="region of interest" description="G4" evidence="2">
    <location>
        <begin position="124"/>
        <end position="127"/>
    </location>
</feature>
<feature type="region of interest" description="G5" evidence="2">
    <location>
        <begin position="154"/>
        <end position="156"/>
    </location>
</feature>
<feature type="binding site" evidence="1">
    <location>
        <begin position="15"/>
        <end position="22"/>
    </location>
    <ligand>
        <name>GTP</name>
        <dbReference type="ChEBI" id="CHEBI:37565"/>
    </ligand>
</feature>
<feature type="binding site" evidence="1">
    <location>
        <begin position="62"/>
        <end position="66"/>
    </location>
    <ligand>
        <name>GTP</name>
        <dbReference type="ChEBI" id="CHEBI:37565"/>
    </ligand>
</feature>
<feature type="binding site" evidence="1">
    <location>
        <begin position="124"/>
        <end position="127"/>
    </location>
    <ligand>
        <name>GTP</name>
        <dbReference type="ChEBI" id="CHEBI:37565"/>
    </ligand>
</feature>
<gene>
    <name evidence="1" type="primary">era</name>
    <name type="ordered locus">SNSL254_A2783</name>
</gene>
<evidence type="ECO:0000255" key="1">
    <source>
        <dbReference type="HAMAP-Rule" id="MF_00367"/>
    </source>
</evidence>
<evidence type="ECO:0000255" key="2">
    <source>
        <dbReference type="PROSITE-ProRule" id="PRU01050"/>
    </source>
</evidence>
<comment type="function">
    <text evidence="1">An essential GTPase that binds both GDP and GTP, with rapid nucleotide exchange. Plays a role in 16S rRNA processing and 30S ribosomal subunit biogenesis and possibly also in cell cycle regulation and energy metabolism.</text>
</comment>
<comment type="subunit">
    <text evidence="1">Monomer.</text>
</comment>
<comment type="subcellular location">
    <subcellularLocation>
        <location>Cytoplasm</location>
    </subcellularLocation>
    <subcellularLocation>
        <location evidence="1">Cell inner membrane</location>
        <topology evidence="1">Peripheral membrane protein</topology>
    </subcellularLocation>
</comment>
<comment type="similarity">
    <text evidence="1 2">Belongs to the TRAFAC class TrmE-Era-EngA-EngB-Septin-like GTPase superfamily. Era GTPase family.</text>
</comment>